<gene>
    <name evidence="1" type="primary">pnp</name>
    <name type="ordered locus">SEN3117</name>
</gene>
<protein>
    <recommendedName>
        <fullName evidence="1">Polyribonucleotide nucleotidyltransferase</fullName>
        <ecNumber evidence="1">2.7.7.8</ecNumber>
    </recommendedName>
    <alternativeName>
        <fullName evidence="1">Polynucleotide phosphorylase</fullName>
        <shortName evidence="1">PNPase</shortName>
    </alternativeName>
</protein>
<proteinExistence type="inferred from homology"/>
<evidence type="ECO:0000255" key="1">
    <source>
        <dbReference type="HAMAP-Rule" id="MF_01595"/>
    </source>
</evidence>
<evidence type="ECO:0000256" key="2">
    <source>
        <dbReference type="SAM" id="MobiDB-lite"/>
    </source>
</evidence>
<keyword id="KW-0963">Cytoplasm</keyword>
<keyword id="KW-0460">Magnesium</keyword>
<keyword id="KW-0479">Metal-binding</keyword>
<keyword id="KW-0548">Nucleotidyltransferase</keyword>
<keyword id="KW-0694">RNA-binding</keyword>
<keyword id="KW-0808">Transferase</keyword>
<organism>
    <name type="scientific">Salmonella enteritidis PT4 (strain P125109)</name>
    <dbReference type="NCBI Taxonomy" id="550537"/>
    <lineage>
        <taxon>Bacteria</taxon>
        <taxon>Pseudomonadati</taxon>
        <taxon>Pseudomonadota</taxon>
        <taxon>Gammaproteobacteria</taxon>
        <taxon>Enterobacterales</taxon>
        <taxon>Enterobacteriaceae</taxon>
        <taxon>Salmonella</taxon>
    </lineage>
</organism>
<dbReference type="EC" id="2.7.7.8" evidence="1"/>
<dbReference type="EMBL" id="AM933172">
    <property type="protein sequence ID" value="CAR34693.1"/>
    <property type="molecule type" value="Genomic_DNA"/>
</dbReference>
<dbReference type="RefSeq" id="WP_001670767.1">
    <property type="nucleotide sequence ID" value="NC_011294.1"/>
</dbReference>
<dbReference type="SMR" id="B5QZV4"/>
<dbReference type="KEGG" id="set:SEN3117"/>
<dbReference type="HOGENOM" id="CLU_004217_2_2_6"/>
<dbReference type="Proteomes" id="UP000000613">
    <property type="component" value="Chromosome"/>
</dbReference>
<dbReference type="GO" id="GO:0005829">
    <property type="term" value="C:cytosol"/>
    <property type="evidence" value="ECO:0007669"/>
    <property type="project" value="TreeGrafter"/>
</dbReference>
<dbReference type="GO" id="GO:0000175">
    <property type="term" value="F:3'-5'-RNA exonuclease activity"/>
    <property type="evidence" value="ECO:0007669"/>
    <property type="project" value="TreeGrafter"/>
</dbReference>
<dbReference type="GO" id="GO:0000287">
    <property type="term" value="F:magnesium ion binding"/>
    <property type="evidence" value="ECO:0007669"/>
    <property type="project" value="UniProtKB-UniRule"/>
</dbReference>
<dbReference type="GO" id="GO:0004654">
    <property type="term" value="F:polyribonucleotide nucleotidyltransferase activity"/>
    <property type="evidence" value="ECO:0007669"/>
    <property type="project" value="UniProtKB-UniRule"/>
</dbReference>
<dbReference type="GO" id="GO:0003723">
    <property type="term" value="F:RNA binding"/>
    <property type="evidence" value="ECO:0007669"/>
    <property type="project" value="UniProtKB-UniRule"/>
</dbReference>
<dbReference type="GO" id="GO:0006402">
    <property type="term" value="P:mRNA catabolic process"/>
    <property type="evidence" value="ECO:0007669"/>
    <property type="project" value="UniProtKB-UniRule"/>
</dbReference>
<dbReference type="GO" id="GO:0006396">
    <property type="term" value="P:RNA processing"/>
    <property type="evidence" value="ECO:0007669"/>
    <property type="project" value="InterPro"/>
</dbReference>
<dbReference type="CDD" id="cd02393">
    <property type="entry name" value="KH-I_PNPase"/>
    <property type="match status" value="1"/>
</dbReference>
<dbReference type="CDD" id="cd11363">
    <property type="entry name" value="RNase_PH_PNPase_1"/>
    <property type="match status" value="1"/>
</dbReference>
<dbReference type="CDD" id="cd11364">
    <property type="entry name" value="RNase_PH_PNPase_2"/>
    <property type="match status" value="1"/>
</dbReference>
<dbReference type="CDD" id="cd04472">
    <property type="entry name" value="S1_PNPase"/>
    <property type="match status" value="1"/>
</dbReference>
<dbReference type="FunFam" id="2.40.50.140:FF:000023">
    <property type="entry name" value="Polyribonucleotide nucleotidyltransferase"/>
    <property type="match status" value="1"/>
</dbReference>
<dbReference type="FunFam" id="3.30.1370.10:FF:000001">
    <property type="entry name" value="Polyribonucleotide nucleotidyltransferase"/>
    <property type="match status" value="1"/>
</dbReference>
<dbReference type="FunFam" id="3.30.230.70:FF:000001">
    <property type="entry name" value="Polyribonucleotide nucleotidyltransferase"/>
    <property type="match status" value="1"/>
</dbReference>
<dbReference type="FunFam" id="3.30.230.70:FF:000002">
    <property type="entry name" value="Polyribonucleotide nucleotidyltransferase"/>
    <property type="match status" value="1"/>
</dbReference>
<dbReference type="Gene3D" id="3.30.230.70">
    <property type="entry name" value="GHMP Kinase, N-terminal domain"/>
    <property type="match status" value="2"/>
</dbReference>
<dbReference type="Gene3D" id="3.30.1370.10">
    <property type="entry name" value="K Homology domain, type 1"/>
    <property type="match status" value="1"/>
</dbReference>
<dbReference type="Gene3D" id="2.40.50.140">
    <property type="entry name" value="Nucleic acid-binding proteins"/>
    <property type="match status" value="1"/>
</dbReference>
<dbReference type="HAMAP" id="MF_01595">
    <property type="entry name" value="PNPase"/>
    <property type="match status" value="1"/>
</dbReference>
<dbReference type="InterPro" id="IPR001247">
    <property type="entry name" value="ExoRNase_PH_dom1"/>
</dbReference>
<dbReference type="InterPro" id="IPR015847">
    <property type="entry name" value="ExoRNase_PH_dom2"/>
</dbReference>
<dbReference type="InterPro" id="IPR036345">
    <property type="entry name" value="ExoRNase_PH_dom2_sf"/>
</dbReference>
<dbReference type="InterPro" id="IPR004087">
    <property type="entry name" value="KH_dom"/>
</dbReference>
<dbReference type="InterPro" id="IPR004088">
    <property type="entry name" value="KH_dom_type_1"/>
</dbReference>
<dbReference type="InterPro" id="IPR036612">
    <property type="entry name" value="KH_dom_type_1_sf"/>
</dbReference>
<dbReference type="InterPro" id="IPR012340">
    <property type="entry name" value="NA-bd_OB-fold"/>
</dbReference>
<dbReference type="InterPro" id="IPR012162">
    <property type="entry name" value="PNPase"/>
</dbReference>
<dbReference type="InterPro" id="IPR027408">
    <property type="entry name" value="PNPase/RNase_PH_dom_sf"/>
</dbReference>
<dbReference type="InterPro" id="IPR015848">
    <property type="entry name" value="PNPase_PH_RNA-bd_bac/org-type"/>
</dbReference>
<dbReference type="InterPro" id="IPR036456">
    <property type="entry name" value="PNPase_PH_RNA-bd_sf"/>
</dbReference>
<dbReference type="InterPro" id="IPR020568">
    <property type="entry name" value="Ribosomal_Su5_D2-typ_SF"/>
</dbReference>
<dbReference type="InterPro" id="IPR003029">
    <property type="entry name" value="S1_domain"/>
</dbReference>
<dbReference type="NCBIfam" id="TIGR03591">
    <property type="entry name" value="polynuc_phos"/>
    <property type="match status" value="1"/>
</dbReference>
<dbReference type="NCBIfam" id="NF008805">
    <property type="entry name" value="PRK11824.1"/>
    <property type="match status" value="1"/>
</dbReference>
<dbReference type="PANTHER" id="PTHR11252">
    <property type="entry name" value="POLYRIBONUCLEOTIDE NUCLEOTIDYLTRANSFERASE"/>
    <property type="match status" value="1"/>
</dbReference>
<dbReference type="PANTHER" id="PTHR11252:SF0">
    <property type="entry name" value="POLYRIBONUCLEOTIDE NUCLEOTIDYLTRANSFERASE 1, MITOCHONDRIAL"/>
    <property type="match status" value="1"/>
</dbReference>
<dbReference type="Pfam" id="PF00013">
    <property type="entry name" value="KH_1"/>
    <property type="match status" value="1"/>
</dbReference>
<dbReference type="Pfam" id="PF03726">
    <property type="entry name" value="PNPase"/>
    <property type="match status" value="1"/>
</dbReference>
<dbReference type="Pfam" id="PF01138">
    <property type="entry name" value="RNase_PH"/>
    <property type="match status" value="2"/>
</dbReference>
<dbReference type="Pfam" id="PF03725">
    <property type="entry name" value="RNase_PH_C"/>
    <property type="match status" value="2"/>
</dbReference>
<dbReference type="Pfam" id="PF00575">
    <property type="entry name" value="S1"/>
    <property type="match status" value="1"/>
</dbReference>
<dbReference type="PIRSF" id="PIRSF005499">
    <property type="entry name" value="PNPase"/>
    <property type="match status" value="1"/>
</dbReference>
<dbReference type="SMART" id="SM00322">
    <property type="entry name" value="KH"/>
    <property type="match status" value="1"/>
</dbReference>
<dbReference type="SMART" id="SM00316">
    <property type="entry name" value="S1"/>
    <property type="match status" value="1"/>
</dbReference>
<dbReference type="SUPFAM" id="SSF54791">
    <property type="entry name" value="Eukaryotic type KH-domain (KH-domain type I)"/>
    <property type="match status" value="1"/>
</dbReference>
<dbReference type="SUPFAM" id="SSF50249">
    <property type="entry name" value="Nucleic acid-binding proteins"/>
    <property type="match status" value="1"/>
</dbReference>
<dbReference type="SUPFAM" id="SSF46915">
    <property type="entry name" value="Polynucleotide phosphorylase/guanosine pentaphosphate synthase (PNPase/GPSI), domain 3"/>
    <property type="match status" value="1"/>
</dbReference>
<dbReference type="SUPFAM" id="SSF55666">
    <property type="entry name" value="Ribonuclease PH domain 2-like"/>
    <property type="match status" value="2"/>
</dbReference>
<dbReference type="SUPFAM" id="SSF54211">
    <property type="entry name" value="Ribosomal protein S5 domain 2-like"/>
    <property type="match status" value="2"/>
</dbReference>
<dbReference type="PROSITE" id="PS50084">
    <property type="entry name" value="KH_TYPE_1"/>
    <property type="match status" value="1"/>
</dbReference>
<dbReference type="PROSITE" id="PS50126">
    <property type="entry name" value="S1"/>
    <property type="match status" value="1"/>
</dbReference>
<feature type="chain" id="PRO_1000192487" description="Polyribonucleotide nucleotidyltransferase">
    <location>
        <begin position="1"/>
        <end position="711"/>
    </location>
</feature>
<feature type="domain" description="KH" evidence="1">
    <location>
        <begin position="553"/>
        <end position="612"/>
    </location>
</feature>
<feature type="domain" description="S1 motif" evidence="1">
    <location>
        <begin position="622"/>
        <end position="690"/>
    </location>
</feature>
<feature type="region of interest" description="Disordered" evidence="2">
    <location>
        <begin position="690"/>
        <end position="711"/>
    </location>
</feature>
<feature type="compositionally biased region" description="Low complexity" evidence="2">
    <location>
        <begin position="694"/>
        <end position="711"/>
    </location>
</feature>
<feature type="binding site" evidence="1">
    <location>
        <position position="486"/>
    </location>
    <ligand>
        <name>Mg(2+)</name>
        <dbReference type="ChEBI" id="CHEBI:18420"/>
    </ligand>
</feature>
<feature type="binding site" evidence="1">
    <location>
        <position position="492"/>
    </location>
    <ligand>
        <name>Mg(2+)</name>
        <dbReference type="ChEBI" id="CHEBI:18420"/>
    </ligand>
</feature>
<accession>B5QZV4</accession>
<comment type="function">
    <text evidence="1">Involved in mRNA degradation. Catalyzes the phosphorolysis of single-stranded polyribonucleotides processively in the 3'- to 5'-direction.</text>
</comment>
<comment type="catalytic activity">
    <reaction evidence="1">
        <text>RNA(n+1) + phosphate = RNA(n) + a ribonucleoside 5'-diphosphate</text>
        <dbReference type="Rhea" id="RHEA:22096"/>
        <dbReference type="Rhea" id="RHEA-COMP:14527"/>
        <dbReference type="Rhea" id="RHEA-COMP:17342"/>
        <dbReference type="ChEBI" id="CHEBI:43474"/>
        <dbReference type="ChEBI" id="CHEBI:57930"/>
        <dbReference type="ChEBI" id="CHEBI:140395"/>
        <dbReference type="EC" id="2.7.7.8"/>
    </reaction>
</comment>
<comment type="cofactor">
    <cofactor evidence="1">
        <name>Mg(2+)</name>
        <dbReference type="ChEBI" id="CHEBI:18420"/>
    </cofactor>
</comment>
<comment type="subunit">
    <text evidence="1">Component of the RNA degradosome, which is a multiprotein complex involved in RNA processing and mRNA degradation.</text>
</comment>
<comment type="subcellular location">
    <subcellularLocation>
        <location evidence="1">Cytoplasm</location>
    </subcellularLocation>
</comment>
<comment type="similarity">
    <text evidence="1">Belongs to the polyribonucleotide nucleotidyltransferase family.</text>
</comment>
<sequence length="711" mass="77039">MLNPIVRKFQYGQHTVTLETGMMARQATAAVMVSMDDTAVFVTVVGQKKAKPGQDFFPLTVNYQERTYAAGRIPGSFFRREGRPSEGETLIARLIDRPVRPLFPEGFVNEVQVIATVVSVNPQVNPDIVAMIGASAALSLSGIPFNGPIGAARVGYINDQYVLNPTQDELKESKLDLVVAGTEAAVLMVESEAELLSEDTMLGAVVFGHEQQQVVIQAINDLVKEAGKPRWDWQPEAVNDALNARVAALAESRLSDAYRITDKQERYAQVDVIKSETIEQLIAEDETLDANELGEILHAIEKNVVRSRVLAGEPRIDGREKDMIRGLDVRTGVLPRTHGSALFTRGETQALVTATLGTARDAQVLDELMGERTDSFLFHYNFPPYSVGETGMVGSPKRREIGHGRLAKRGVLAVMPDMDKFPYTVRVVSEITESNGSSSMASVCGASLALMDAGVPIKAAVAGIAMGLVKEGDNYVVLSDILGDEDHLGDMDFKVAGSRDGISALQMDIKIEGITKEIMQVALNQAKGARLHILGVMEQAINAPRGDISEFAPRIHTIKISTDKIKDVIGKGGSVIRALTEETGTTIEIEDDGTVKIAATDGEKAKYAIRRIEEITAEIEVGRIYNGKVTRIVDFGAFVAIGGGKEGLVHISQIADKRVEKVTDYLQMGQEVPVKVLEVDRQGRVRLSIKEATEQSQPAAAPEAPASEQAE</sequence>
<name>PNP_SALEP</name>
<reference key="1">
    <citation type="journal article" date="2008" name="Genome Res.">
        <title>Comparative genome analysis of Salmonella enteritidis PT4 and Salmonella gallinarum 287/91 provides insights into evolutionary and host adaptation pathways.</title>
        <authorList>
            <person name="Thomson N.R."/>
            <person name="Clayton D.J."/>
            <person name="Windhorst D."/>
            <person name="Vernikos G."/>
            <person name="Davidson S."/>
            <person name="Churcher C."/>
            <person name="Quail M.A."/>
            <person name="Stevens M."/>
            <person name="Jones M.A."/>
            <person name="Watson M."/>
            <person name="Barron A."/>
            <person name="Layton A."/>
            <person name="Pickard D."/>
            <person name="Kingsley R.A."/>
            <person name="Bignell A."/>
            <person name="Clark L."/>
            <person name="Harris B."/>
            <person name="Ormond D."/>
            <person name="Abdellah Z."/>
            <person name="Brooks K."/>
            <person name="Cherevach I."/>
            <person name="Chillingworth T."/>
            <person name="Woodward J."/>
            <person name="Norberczak H."/>
            <person name="Lord A."/>
            <person name="Arrowsmith C."/>
            <person name="Jagels K."/>
            <person name="Moule S."/>
            <person name="Mungall K."/>
            <person name="Saunders M."/>
            <person name="Whitehead S."/>
            <person name="Chabalgoity J.A."/>
            <person name="Maskell D."/>
            <person name="Humphreys T."/>
            <person name="Roberts M."/>
            <person name="Barrow P.A."/>
            <person name="Dougan G."/>
            <person name="Parkhill J."/>
        </authorList>
    </citation>
    <scope>NUCLEOTIDE SEQUENCE [LARGE SCALE GENOMIC DNA]</scope>
    <source>
        <strain>P125109</strain>
    </source>
</reference>